<reference key="1">
    <citation type="journal article" date="2006" name="Nat. Biotechnol.">
        <title>Complete genome sequence of the entomopathogenic and metabolically versatile soil bacterium Pseudomonas entomophila.</title>
        <authorList>
            <person name="Vodovar N."/>
            <person name="Vallenet D."/>
            <person name="Cruveiller S."/>
            <person name="Rouy Z."/>
            <person name="Barbe V."/>
            <person name="Acosta C."/>
            <person name="Cattolico L."/>
            <person name="Jubin C."/>
            <person name="Lajus A."/>
            <person name="Segurens B."/>
            <person name="Vacherie B."/>
            <person name="Wincker P."/>
            <person name="Weissenbach J."/>
            <person name="Lemaitre B."/>
            <person name="Medigue C."/>
            <person name="Boccard F."/>
        </authorList>
    </citation>
    <scope>NUCLEOTIDE SEQUENCE [LARGE SCALE GENOMIC DNA]</scope>
    <source>
        <strain>L48</strain>
    </source>
</reference>
<comment type="function">
    <text evidence="1">Required for maturation of urease via the functional incorporation of the urease nickel metallocenter.</text>
</comment>
<comment type="subunit">
    <text evidence="1">UreD, UreF and UreG form a complex that acts as a GTP-hydrolysis-dependent molecular chaperone, activating the urease apoprotein by helping to assemble the nickel containing metallocenter of UreC. The UreE protein probably delivers the nickel.</text>
</comment>
<comment type="subcellular location">
    <subcellularLocation>
        <location evidence="1">Cytoplasm</location>
    </subcellularLocation>
</comment>
<comment type="similarity">
    <text evidence="1">Belongs to the UreD family.</text>
</comment>
<organism>
    <name type="scientific">Pseudomonas entomophila (strain L48)</name>
    <dbReference type="NCBI Taxonomy" id="384676"/>
    <lineage>
        <taxon>Bacteria</taxon>
        <taxon>Pseudomonadati</taxon>
        <taxon>Pseudomonadota</taxon>
        <taxon>Gammaproteobacteria</taxon>
        <taxon>Pseudomonadales</taxon>
        <taxon>Pseudomonadaceae</taxon>
        <taxon>Pseudomonas</taxon>
    </lineage>
</organism>
<protein>
    <recommendedName>
        <fullName evidence="1">Urease accessory protein UreD</fullName>
    </recommendedName>
</protein>
<dbReference type="EMBL" id="CT573326">
    <property type="protein sequence ID" value="CAK14922.1"/>
    <property type="molecule type" value="Genomic_DNA"/>
</dbReference>
<dbReference type="RefSeq" id="WP_011533325.1">
    <property type="nucleotide sequence ID" value="NC_008027.1"/>
</dbReference>
<dbReference type="SMR" id="Q1IBP3"/>
<dbReference type="STRING" id="384676.PSEEN2093"/>
<dbReference type="GeneID" id="32805301"/>
<dbReference type="KEGG" id="pen:PSEEN2093"/>
<dbReference type="eggNOG" id="COG0829">
    <property type="taxonomic scope" value="Bacteria"/>
</dbReference>
<dbReference type="HOGENOM" id="CLU_056339_0_0_6"/>
<dbReference type="OrthoDB" id="9798842at2"/>
<dbReference type="Proteomes" id="UP000000658">
    <property type="component" value="Chromosome"/>
</dbReference>
<dbReference type="GO" id="GO:0005737">
    <property type="term" value="C:cytoplasm"/>
    <property type="evidence" value="ECO:0007669"/>
    <property type="project" value="UniProtKB-SubCell"/>
</dbReference>
<dbReference type="GO" id="GO:0016151">
    <property type="term" value="F:nickel cation binding"/>
    <property type="evidence" value="ECO:0007669"/>
    <property type="project" value="UniProtKB-UniRule"/>
</dbReference>
<dbReference type="HAMAP" id="MF_01384">
    <property type="entry name" value="UreD"/>
    <property type="match status" value="1"/>
</dbReference>
<dbReference type="InterPro" id="IPR002669">
    <property type="entry name" value="UreD"/>
</dbReference>
<dbReference type="PANTHER" id="PTHR33643">
    <property type="entry name" value="UREASE ACCESSORY PROTEIN D"/>
    <property type="match status" value="1"/>
</dbReference>
<dbReference type="PANTHER" id="PTHR33643:SF1">
    <property type="entry name" value="UREASE ACCESSORY PROTEIN D"/>
    <property type="match status" value="1"/>
</dbReference>
<dbReference type="Pfam" id="PF01774">
    <property type="entry name" value="UreD"/>
    <property type="match status" value="1"/>
</dbReference>
<gene>
    <name evidence="1" type="primary">ureD</name>
    <name type="ordered locus">PSEEN2093</name>
</gene>
<evidence type="ECO:0000255" key="1">
    <source>
        <dbReference type="HAMAP-Rule" id="MF_01384"/>
    </source>
</evidence>
<proteinExistence type="inferred from homology"/>
<accession>Q1IBP3</accession>
<sequence length="277" mass="30400">MSLAQQIEPPQADPGWSAHLQLRFIQREGVTRLGARRHVGPLLVQRPFYPEGAPCHVYVLHPPGGIVAGDRLELDIHLEAGSHALLTMPGASKFYRSIGPTAHLAQRFHLAAGSTLEWLPQDSIFFNGAQASLDSRFSVEPGARLLAWETLCLGRPVMGERFDQGAIDSRLCIDLPGEPGLHERLRIEGGRLDKVGGHPLVATFCATPADQAVLEQVRQQLEALDTPAGATLLGPLLVIRLLDHDNQHLQRNLQRLWHLLRPAVLGLAPCPPRIWAT</sequence>
<name>URED_PSEE4</name>
<feature type="chain" id="PRO_0000340485" description="Urease accessory protein UreD">
    <location>
        <begin position="1"/>
        <end position="277"/>
    </location>
</feature>
<keyword id="KW-0143">Chaperone</keyword>
<keyword id="KW-0963">Cytoplasm</keyword>
<keyword id="KW-0996">Nickel insertion</keyword>